<name>RS19_STAA8</name>
<protein>
    <recommendedName>
        <fullName evidence="1">Small ribosomal subunit protein uS19</fullName>
    </recommendedName>
    <alternativeName>
        <fullName evidence="2">30S ribosomal protein S19</fullName>
    </alternativeName>
</protein>
<comment type="function">
    <text evidence="1">Protein S19 forms a complex with S13 that binds strongly to the 16S ribosomal RNA.</text>
</comment>
<comment type="similarity">
    <text evidence="1">Belongs to the universal ribosomal protein uS19 family.</text>
</comment>
<organism>
    <name type="scientific">Staphylococcus aureus (strain NCTC 8325 / PS 47)</name>
    <dbReference type="NCBI Taxonomy" id="93061"/>
    <lineage>
        <taxon>Bacteria</taxon>
        <taxon>Bacillati</taxon>
        <taxon>Bacillota</taxon>
        <taxon>Bacilli</taxon>
        <taxon>Bacillales</taxon>
        <taxon>Staphylococcaceae</taxon>
        <taxon>Staphylococcus</taxon>
    </lineage>
</organism>
<proteinExistence type="evidence at protein level"/>
<reference key="1">
    <citation type="book" date="2006" name="Gram positive pathogens, 2nd edition">
        <title>The Staphylococcus aureus NCTC 8325 genome.</title>
        <editorList>
            <person name="Fischetti V."/>
            <person name="Novick R."/>
            <person name="Ferretti J."/>
            <person name="Portnoy D."/>
            <person name="Rood J."/>
        </editorList>
        <authorList>
            <person name="Gillaspy A.F."/>
            <person name="Worrell V."/>
            <person name="Orvis J."/>
            <person name="Roe B.A."/>
            <person name="Dyer D.W."/>
            <person name="Iandolo J.J."/>
        </authorList>
    </citation>
    <scope>NUCLEOTIDE SEQUENCE [LARGE SCALE GENOMIC DNA]</scope>
    <source>
        <strain>NCTC 8325 / PS 47</strain>
    </source>
</reference>
<feature type="chain" id="PRO_0000265439" description="Small ribosomal subunit protein uS19">
    <location>
        <begin position="1"/>
        <end position="92"/>
    </location>
</feature>
<feature type="strand" evidence="3">
    <location>
        <begin position="7"/>
        <end position="9"/>
    </location>
</feature>
<feature type="helix" evidence="3">
    <location>
        <begin position="15"/>
        <end position="24"/>
    </location>
</feature>
<feature type="helix" evidence="3">
    <location>
        <begin position="42"/>
        <end position="44"/>
    </location>
</feature>
<feature type="strand" evidence="3">
    <location>
        <begin position="48"/>
        <end position="51"/>
    </location>
</feature>
<feature type="strand" evidence="3">
    <location>
        <begin position="58"/>
        <end position="61"/>
    </location>
</feature>
<feature type="helix" evidence="3">
    <location>
        <begin position="79"/>
        <end position="82"/>
    </location>
</feature>
<evidence type="ECO:0000255" key="1">
    <source>
        <dbReference type="HAMAP-Rule" id="MF_00531"/>
    </source>
</evidence>
<evidence type="ECO:0000305" key="2"/>
<evidence type="ECO:0007829" key="3">
    <source>
        <dbReference type="PDB" id="8BYV"/>
    </source>
</evidence>
<sequence>MARSIKKGPFVDEHLMKKVEAQEGSEKKQVIKTWSRRSTIFPNFIGHTFAVYDGRKHVPVYVTEDMVGHKLGEFAPTRTFKGHVADDKKTRR</sequence>
<accession>Q2FW10</accession>
<gene>
    <name evidence="1" type="primary">rpsS</name>
    <name type="ordered locus">SAOUHSC_02508</name>
</gene>
<dbReference type="EMBL" id="CP000253">
    <property type="protein sequence ID" value="ABD31526.1"/>
    <property type="molecule type" value="Genomic_DNA"/>
</dbReference>
<dbReference type="RefSeq" id="WP_000124353.1">
    <property type="nucleotide sequence ID" value="NZ_LS483365.1"/>
</dbReference>
<dbReference type="RefSeq" id="YP_500975.1">
    <property type="nucleotide sequence ID" value="NC_007795.1"/>
</dbReference>
<dbReference type="PDB" id="5LI0">
    <property type="method" value="EM"/>
    <property type="resolution" value="3.80 A"/>
    <property type="chains" value="s=4-87"/>
</dbReference>
<dbReference type="PDB" id="5ND8">
    <property type="method" value="EM"/>
    <property type="resolution" value="3.70 A"/>
    <property type="chains" value="s=1-92"/>
</dbReference>
<dbReference type="PDB" id="5ND9">
    <property type="method" value="EM"/>
    <property type="resolution" value="3.70 A"/>
    <property type="chains" value="s=1-92"/>
</dbReference>
<dbReference type="PDB" id="5TCU">
    <property type="method" value="EM"/>
    <property type="resolution" value="3.90 A"/>
    <property type="chains" value="SI=4-81"/>
</dbReference>
<dbReference type="PDB" id="6YEF">
    <property type="method" value="EM"/>
    <property type="resolution" value="3.20 A"/>
    <property type="chains" value="s=1-92"/>
</dbReference>
<dbReference type="PDB" id="7BGE">
    <property type="method" value="EM"/>
    <property type="resolution" value="3.60 A"/>
    <property type="chains" value="s=1-92"/>
</dbReference>
<dbReference type="PDB" id="7KWG">
    <property type="method" value="EM"/>
    <property type="resolution" value="3.75 A"/>
    <property type="chains" value="s=1-92"/>
</dbReference>
<dbReference type="PDB" id="7NHL">
    <property type="method" value="EM"/>
    <property type="resolution" value="3.10 A"/>
    <property type="chains" value="t=1-92"/>
</dbReference>
<dbReference type="PDB" id="7NHM">
    <property type="method" value="EM"/>
    <property type="resolution" value="3.10 A"/>
    <property type="chains" value="t=1-92"/>
</dbReference>
<dbReference type="PDB" id="8BH6">
    <property type="method" value="EM"/>
    <property type="resolution" value="3.70 A"/>
    <property type="chains" value="s=1-92"/>
</dbReference>
<dbReference type="PDB" id="8BH7">
    <property type="method" value="EM"/>
    <property type="resolution" value="4.23 A"/>
    <property type="chains" value="s=1-92"/>
</dbReference>
<dbReference type="PDB" id="8BYV">
    <property type="method" value="EM"/>
    <property type="resolution" value="2.89 A"/>
    <property type="chains" value="s=1-92"/>
</dbReference>
<dbReference type="PDB" id="8P2F">
    <property type="method" value="EM"/>
    <property type="resolution" value="2.44 A"/>
    <property type="chains" value="t=1-92"/>
</dbReference>
<dbReference type="PDB" id="8P2G">
    <property type="method" value="EM"/>
    <property type="resolution" value="2.02 A"/>
    <property type="chains" value="t=1-92"/>
</dbReference>
<dbReference type="PDB" id="8P2H">
    <property type="method" value="EM"/>
    <property type="resolution" value="2.49 A"/>
    <property type="chains" value="t=1-92"/>
</dbReference>
<dbReference type="PDB" id="8Y38">
    <property type="method" value="EM"/>
    <property type="resolution" value="2.58 A"/>
    <property type="chains" value="s=1-92"/>
</dbReference>
<dbReference type="PDB" id="8Y39">
    <property type="method" value="EM"/>
    <property type="resolution" value="3.60 A"/>
    <property type="chains" value="s=1-92"/>
</dbReference>
<dbReference type="PDBsum" id="5LI0"/>
<dbReference type="PDBsum" id="5ND8"/>
<dbReference type="PDBsum" id="5ND9"/>
<dbReference type="PDBsum" id="5TCU"/>
<dbReference type="PDBsum" id="6YEF"/>
<dbReference type="PDBsum" id="7BGE"/>
<dbReference type="PDBsum" id="7KWG"/>
<dbReference type="PDBsum" id="7NHL"/>
<dbReference type="PDBsum" id="7NHM"/>
<dbReference type="PDBsum" id="8BH6"/>
<dbReference type="PDBsum" id="8BH7"/>
<dbReference type="PDBsum" id="8BYV"/>
<dbReference type="PDBsum" id="8P2F"/>
<dbReference type="PDBsum" id="8P2G"/>
<dbReference type="PDBsum" id="8P2H"/>
<dbReference type="PDBsum" id="8Y38"/>
<dbReference type="PDBsum" id="8Y39"/>
<dbReference type="EMDB" id="EMD-10791"/>
<dbReference type="EMDB" id="EMD-12179"/>
<dbReference type="EMDB" id="EMD-12332"/>
<dbReference type="EMDB" id="EMD-12333"/>
<dbReference type="EMDB" id="EMD-16048"/>
<dbReference type="EMDB" id="EMD-16049"/>
<dbReference type="EMDB" id="EMD-16334"/>
<dbReference type="EMDB" id="EMD-17363"/>
<dbReference type="EMDB" id="EMD-17364"/>
<dbReference type="EMDB" id="EMD-17365"/>
<dbReference type="EMDB" id="EMD-23052"/>
<dbReference type="EMDB" id="EMD-3624"/>
<dbReference type="EMDB" id="EMD-3625"/>
<dbReference type="EMDB" id="EMD-4050"/>
<dbReference type="EMDB" id="EMD-8402"/>
<dbReference type="SMR" id="Q2FW10"/>
<dbReference type="IntAct" id="Q2FW10">
    <property type="interactions" value="1"/>
</dbReference>
<dbReference type="STRING" id="93061.SAOUHSC_02508"/>
<dbReference type="PaxDb" id="1280-SAXN108_2495"/>
<dbReference type="GeneID" id="3920884"/>
<dbReference type="GeneID" id="98346558"/>
<dbReference type="KEGG" id="sao:SAOUHSC_02508"/>
<dbReference type="PATRIC" id="fig|93061.5.peg.2263"/>
<dbReference type="eggNOG" id="COG0185">
    <property type="taxonomic scope" value="Bacteria"/>
</dbReference>
<dbReference type="HOGENOM" id="CLU_144911_0_1_9"/>
<dbReference type="OrthoDB" id="9797833at2"/>
<dbReference type="PRO" id="PR:Q2FW10"/>
<dbReference type="Proteomes" id="UP000008816">
    <property type="component" value="Chromosome"/>
</dbReference>
<dbReference type="GO" id="GO:0005737">
    <property type="term" value="C:cytoplasm"/>
    <property type="evidence" value="ECO:0007669"/>
    <property type="project" value="UniProtKB-ARBA"/>
</dbReference>
<dbReference type="GO" id="GO:0015935">
    <property type="term" value="C:small ribosomal subunit"/>
    <property type="evidence" value="ECO:0007669"/>
    <property type="project" value="InterPro"/>
</dbReference>
<dbReference type="GO" id="GO:0019843">
    <property type="term" value="F:rRNA binding"/>
    <property type="evidence" value="ECO:0007669"/>
    <property type="project" value="UniProtKB-UniRule"/>
</dbReference>
<dbReference type="GO" id="GO:0003735">
    <property type="term" value="F:structural constituent of ribosome"/>
    <property type="evidence" value="ECO:0000318"/>
    <property type="project" value="GO_Central"/>
</dbReference>
<dbReference type="GO" id="GO:0000028">
    <property type="term" value="P:ribosomal small subunit assembly"/>
    <property type="evidence" value="ECO:0000318"/>
    <property type="project" value="GO_Central"/>
</dbReference>
<dbReference type="GO" id="GO:0006412">
    <property type="term" value="P:translation"/>
    <property type="evidence" value="ECO:0007669"/>
    <property type="project" value="UniProtKB-UniRule"/>
</dbReference>
<dbReference type="FunFam" id="3.30.860.10:FF:000001">
    <property type="entry name" value="30S ribosomal protein S19"/>
    <property type="match status" value="1"/>
</dbReference>
<dbReference type="Gene3D" id="3.30.860.10">
    <property type="entry name" value="30s Ribosomal Protein S19, Chain A"/>
    <property type="match status" value="1"/>
</dbReference>
<dbReference type="HAMAP" id="MF_00531">
    <property type="entry name" value="Ribosomal_uS19"/>
    <property type="match status" value="1"/>
</dbReference>
<dbReference type="InterPro" id="IPR002222">
    <property type="entry name" value="Ribosomal_uS19"/>
</dbReference>
<dbReference type="InterPro" id="IPR005732">
    <property type="entry name" value="Ribosomal_uS19_bac-type"/>
</dbReference>
<dbReference type="InterPro" id="IPR020934">
    <property type="entry name" value="Ribosomal_uS19_CS"/>
</dbReference>
<dbReference type="InterPro" id="IPR023575">
    <property type="entry name" value="Ribosomal_uS19_SF"/>
</dbReference>
<dbReference type="NCBIfam" id="TIGR01050">
    <property type="entry name" value="rpsS_bact"/>
    <property type="match status" value="1"/>
</dbReference>
<dbReference type="PANTHER" id="PTHR11880">
    <property type="entry name" value="RIBOSOMAL PROTEIN S19P FAMILY MEMBER"/>
    <property type="match status" value="1"/>
</dbReference>
<dbReference type="PANTHER" id="PTHR11880:SF8">
    <property type="entry name" value="SMALL RIBOSOMAL SUBUNIT PROTEIN US19M"/>
    <property type="match status" value="1"/>
</dbReference>
<dbReference type="Pfam" id="PF00203">
    <property type="entry name" value="Ribosomal_S19"/>
    <property type="match status" value="1"/>
</dbReference>
<dbReference type="PIRSF" id="PIRSF002144">
    <property type="entry name" value="Ribosomal_S19"/>
    <property type="match status" value="1"/>
</dbReference>
<dbReference type="PRINTS" id="PR00975">
    <property type="entry name" value="RIBOSOMALS19"/>
</dbReference>
<dbReference type="SUPFAM" id="SSF54570">
    <property type="entry name" value="Ribosomal protein S19"/>
    <property type="match status" value="1"/>
</dbReference>
<dbReference type="PROSITE" id="PS00323">
    <property type="entry name" value="RIBOSOMAL_S19"/>
    <property type="match status" value="1"/>
</dbReference>
<keyword id="KW-0002">3D-structure</keyword>
<keyword id="KW-1185">Reference proteome</keyword>
<keyword id="KW-0687">Ribonucleoprotein</keyword>
<keyword id="KW-0689">Ribosomal protein</keyword>
<keyword id="KW-0694">RNA-binding</keyword>
<keyword id="KW-0699">rRNA-binding</keyword>